<protein>
    <recommendedName>
        <fullName>Postreplication repair E3 ubiquitin-protein ligase RAD18</fullName>
        <ecNumber>2.3.2.27</ecNumber>
    </recommendedName>
    <alternativeName>
        <fullName evidence="6">RING-type E3 ubiquitin transferase RAD18</fullName>
    </alternativeName>
</protein>
<accession>Q6CHI1</accession>
<reference key="1">
    <citation type="journal article" date="2004" name="Nature">
        <title>Genome evolution in yeasts.</title>
        <authorList>
            <person name="Dujon B."/>
            <person name="Sherman D."/>
            <person name="Fischer G."/>
            <person name="Durrens P."/>
            <person name="Casaregola S."/>
            <person name="Lafontaine I."/>
            <person name="de Montigny J."/>
            <person name="Marck C."/>
            <person name="Neuveglise C."/>
            <person name="Talla E."/>
            <person name="Goffard N."/>
            <person name="Frangeul L."/>
            <person name="Aigle M."/>
            <person name="Anthouard V."/>
            <person name="Babour A."/>
            <person name="Barbe V."/>
            <person name="Barnay S."/>
            <person name="Blanchin S."/>
            <person name="Beckerich J.-M."/>
            <person name="Beyne E."/>
            <person name="Bleykasten C."/>
            <person name="Boisrame A."/>
            <person name="Boyer J."/>
            <person name="Cattolico L."/>
            <person name="Confanioleri F."/>
            <person name="de Daruvar A."/>
            <person name="Despons L."/>
            <person name="Fabre E."/>
            <person name="Fairhead C."/>
            <person name="Ferry-Dumazet H."/>
            <person name="Groppi A."/>
            <person name="Hantraye F."/>
            <person name="Hennequin C."/>
            <person name="Jauniaux N."/>
            <person name="Joyet P."/>
            <person name="Kachouri R."/>
            <person name="Kerrest A."/>
            <person name="Koszul R."/>
            <person name="Lemaire M."/>
            <person name="Lesur I."/>
            <person name="Ma L."/>
            <person name="Muller H."/>
            <person name="Nicaud J.-M."/>
            <person name="Nikolski M."/>
            <person name="Oztas S."/>
            <person name="Ozier-Kalogeropoulos O."/>
            <person name="Pellenz S."/>
            <person name="Potier S."/>
            <person name="Richard G.-F."/>
            <person name="Straub M.-L."/>
            <person name="Suleau A."/>
            <person name="Swennen D."/>
            <person name="Tekaia F."/>
            <person name="Wesolowski-Louvel M."/>
            <person name="Westhof E."/>
            <person name="Wirth B."/>
            <person name="Zeniou-Meyer M."/>
            <person name="Zivanovic Y."/>
            <person name="Bolotin-Fukuhara M."/>
            <person name="Thierry A."/>
            <person name="Bouchier C."/>
            <person name="Caudron B."/>
            <person name="Scarpelli C."/>
            <person name="Gaillardin C."/>
            <person name="Weissenbach J."/>
            <person name="Wincker P."/>
            <person name="Souciet J.-L."/>
        </authorList>
    </citation>
    <scope>NUCLEOTIDE SEQUENCE [LARGE SCALE GENOMIC DNA]</scope>
    <source>
        <strain>CLIB 122 / E 150</strain>
    </source>
</reference>
<keyword id="KW-0227">DNA damage</keyword>
<keyword id="KW-0234">DNA repair</keyword>
<keyword id="KW-0238">DNA-binding</keyword>
<keyword id="KW-0479">Metal-binding</keyword>
<keyword id="KW-0539">Nucleus</keyword>
<keyword id="KW-1185">Reference proteome</keyword>
<keyword id="KW-0808">Transferase</keyword>
<keyword id="KW-0833">Ubl conjugation pathway</keyword>
<keyword id="KW-0862">Zinc</keyword>
<keyword id="KW-0863">Zinc-finger</keyword>
<feature type="chain" id="PRO_0000056160" description="Postreplication repair E3 ubiquitin-protein ligase RAD18">
    <location>
        <begin position="1"/>
        <end position="344"/>
    </location>
</feature>
<feature type="domain" description="SAP" evidence="3">
    <location>
        <begin position="197"/>
        <end position="231"/>
    </location>
</feature>
<feature type="zinc finger region" description="RING-type" evidence="2">
    <location>
        <begin position="28"/>
        <end position="67"/>
    </location>
</feature>
<feature type="zinc finger region" description="UBZ4-type" evidence="4">
    <location>
        <begin position="146"/>
        <end position="174"/>
    </location>
</feature>
<feature type="region of interest" description="Disordered" evidence="5">
    <location>
        <begin position="107"/>
        <end position="132"/>
    </location>
</feature>
<feature type="region of interest" description="Disordered" evidence="5">
    <location>
        <begin position="302"/>
        <end position="344"/>
    </location>
</feature>
<feature type="compositionally biased region" description="Basic and acidic residues" evidence="5">
    <location>
        <begin position="303"/>
        <end position="337"/>
    </location>
</feature>
<feature type="binding site" evidence="4">
    <location>
        <position position="149"/>
    </location>
    <ligand>
        <name>Zn(2+)</name>
        <dbReference type="ChEBI" id="CHEBI:29105"/>
    </ligand>
</feature>
<feature type="binding site" evidence="4">
    <location>
        <position position="152"/>
    </location>
    <ligand>
        <name>Zn(2+)</name>
        <dbReference type="ChEBI" id="CHEBI:29105"/>
    </ligand>
</feature>
<feature type="binding site" evidence="4">
    <location>
        <position position="164"/>
    </location>
    <ligand>
        <name>Zn(2+)</name>
        <dbReference type="ChEBI" id="CHEBI:29105"/>
    </ligand>
</feature>
<feature type="binding site" evidence="4">
    <location>
        <position position="169"/>
    </location>
    <ligand>
        <name>Zn(2+)</name>
        <dbReference type="ChEBI" id="CHEBI:29105"/>
    </ligand>
</feature>
<evidence type="ECO:0000250" key="1"/>
<evidence type="ECO:0000255" key="2">
    <source>
        <dbReference type="PROSITE-ProRule" id="PRU00175"/>
    </source>
</evidence>
<evidence type="ECO:0000255" key="3">
    <source>
        <dbReference type="PROSITE-ProRule" id="PRU00186"/>
    </source>
</evidence>
<evidence type="ECO:0000255" key="4">
    <source>
        <dbReference type="PROSITE-ProRule" id="PRU01256"/>
    </source>
</evidence>
<evidence type="ECO:0000256" key="5">
    <source>
        <dbReference type="SAM" id="MobiDB-lite"/>
    </source>
</evidence>
<evidence type="ECO:0000305" key="6"/>
<name>RAD18_YARLI</name>
<sequence>MNSDIPDPSDWIDSKLSGLKDVDETLRCHICKEFFTAPMITGCGHTFCSLCIQRYLTNTSQRCPTCMQEQQISQLRKNVTVETLVEHFSAQRATILRVVKEAAKQPIPEVVEPPSSPDLDDGRRRSGRKRTRTNYTETLVSSDDIQVECPVCQAMLPGAAINRHLDNNCNDTGANGGNWLGTKKKTKPLRKIQRVNQASESVANVRRKLQDEGLSTSGSKQTLFRRYDEWVTLWNANVDNKTPRSKSDIKDDLRRWETTVVANENAQPVKMTIKNIDDRQWVQKHKEDYDYLIEQARKSILKKKQEKEKEQQQQQEGHQKAVDRREDNEPDMKRSETEGYQVVS</sequence>
<proteinExistence type="inferred from homology"/>
<dbReference type="EC" id="2.3.2.27"/>
<dbReference type="EMBL" id="CR382127">
    <property type="protein sequence ID" value="CAG83807.1"/>
    <property type="molecule type" value="Genomic_DNA"/>
</dbReference>
<dbReference type="RefSeq" id="XP_499880.1">
    <property type="nucleotide sequence ID" value="XM_499880.1"/>
</dbReference>
<dbReference type="SMR" id="Q6CHI1"/>
<dbReference type="FunCoup" id="Q6CHI1">
    <property type="interactions" value="305"/>
</dbReference>
<dbReference type="STRING" id="284591.Q6CHI1"/>
<dbReference type="EnsemblFungi" id="CAG83807">
    <property type="protein sequence ID" value="CAG83807"/>
    <property type="gene ID" value="YALI0_A08580g"/>
</dbReference>
<dbReference type="KEGG" id="yli:2905883"/>
<dbReference type="VEuPathDB" id="FungiDB:YALI0_A08580g"/>
<dbReference type="HOGENOM" id="CLU_028491_2_0_1"/>
<dbReference type="InParanoid" id="Q6CHI1"/>
<dbReference type="OMA" id="IPNTGPR"/>
<dbReference type="OrthoDB" id="96298at4891"/>
<dbReference type="UniPathway" id="UPA00143"/>
<dbReference type="Proteomes" id="UP000001300">
    <property type="component" value="Chromosome A"/>
</dbReference>
<dbReference type="GO" id="GO:0005634">
    <property type="term" value="C:nucleus"/>
    <property type="evidence" value="ECO:0000318"/>
    <property type="project" value="GO_Central"/>
</dbReference>
<dbReference type="GO" id="GO:0097505">
    <property type="term" value="C:Rad6-Rad18 complex"/>
    <property type="evidence" value="ECO:0000318"/>
    <property type="project" value="GO_Central"/>
</dbReference>
<dbReference type="GO" id="GO:0003697">
    <property type="term" value="F:single-stranded DNA binding"/>
    <property type="evidence" value="ECO:0007669"/>
    <property type="project" value="InterPro"/>
</dbReference>
<dbReference type="GO" id="GO:0061630">
    <property type="term" value="F:ubiquitin protein ligase activity"/>
    <property type="evidence" value="ECO:0007669"/>
    <property type="project" value="InterPro"/>
</dbReference>
<dbReference type="GO" id="GO:0008270">
    <property type="term" value="F:zinc ion binding"/>
    <property type="evidence" value="ECO:0007669"/>
    <property type="project" value="UniProtKB-KW"/>
</dbReference>
<dbReference type="GO" id="GO:0006301">
    <property type="term" value="P:postreplication repair"/>
    <property type="evidence" value="ECO:0000318"/>
    <property type="project" value="GO_Central"/>
</dbReference>
<dbReference type="GO" id="GO:0006513">
    <property type="term" value="P:protein monoubiquitination"/>
    <property type="evidence" value="ECO:0000318"/>
    <property type="project" value="GO_Central"/>
</dbReference>
<dbReference type="FunFam" id="3.30.40.10:FF:000172">
    <property type="entry name" value="E3 ubiquitin-protein ligase RAD18"/>
    <property type="match status" value="1"/>
</dbReference>
<dbReference type="Gene3D" id="3.30.160.60">
    <property type="entry name" value="Classic Zinc Finger"/>
    <property type="match status" value="1"/>
</dbReference>
<dbReference type="Gene3D" id="3.30.40.10">
    <property type="entry name" value="Zinc/RING finger domain, C3HC4 (zinc finger)"/>
    <property type="match status" value="1"/>
</dbReference>
<dbReference type="InterPro" id="IPR039577">
    <property type="entry name" value="Rad18"/>
</dbReference>
<dbReference type="InterPro" id="IPR006642">
    <property type="entry name" value="Rad18_UBZ4"/>
</dbReference>
<dbReference type="InterPro" id="IPR003034">
    <property type="entry name" value="SAP_dom"/>
</dbReference>
<dbReference type="InterPro" id="IPR040539">
    <property type="entry name" value="Znf-WRNIP1_ubi"/>
</dbReference>
<dbReference type="InterPro" id="IPR001841">
    <property type="entry name" value="Znf_RING"/>
</dbReference>
<dbReference type="InterPro" id="IPR013083">
    <property type="entry name" value="Znf_RING/FYVE/PHD"/>
</dbReference>
<dbReference type="InterPro" id="IPR017907">
    <property type="entry name" value="Znf_RING_CS"/>
</dbReference>
<dbReference type="PANTHER" id="PTHR14134">
    <property type="entry name" value="E3 UBIQUITIN-PROTEIN LIGASE RAD18"/>
    <property type="match status" value="1"/>
</dbReference>
<dbReference type="PANTHER" id="PTHR14134:SF2">
    <property type="entry name" value="E3 UBIQUITIN-PROTEIN LIGASE RAD18"/>
    <property type="match status" value="1"/>
</dbReference>
<dbReference type="Pfam" id="PF13923">
    <property type="entry name" value="zf-C3HC4_2"/>
    <property type="match status" value="1"/>
</dbReference>
<dbReference type="Pfam" id="PF18279">
    <property type="entry name" value="zf-WRNIP1_ubi"/>
    <property type="match status" value="1"/>
</dbReference>
<dbReference type="SMART" id="SM00184">
    <property type="entry name" value="RING"/>
    <property type="match status" value="1"/>
</dbReference>
<dbReference type="SMART" id="SM00734">
    <property type="entry name" value="ZnF_Rad18"/>
    <property type="match status" value="1"/>
</dbReference>
<dbReference type="SUPFAM" id="SSF57850">
    <property type="entry name" value="RING/U-box"/>
    <property type="match status" value="1"/>
</dbReference>
<dbReference type="PROSITE" id="PS50800">
    <property type="entry name" value="SAP"/>
    <property type="match status" value="1"/>
</dbReference>
<dbReference type="PROSITE" id="PS00518">
    <property type="entry name" value="ZF_RING_1"/>
    <property type="match status" value="1"/>
</dbReference>
<dbReference type="PROSITE" id="PS50089">
    <property type="entry name" value="ZF_RING_2"/>
    <property type="match status" value="1"/>
</dbReference>
<dbReference type="PROSITE" id="PS51908">
    <property type="entry name" value="ZF_UBZ4"/>
    <property type="match status" value="1"/>
</dbReference>
<organism>
    <name type="scientific">Yarrowia lipolytica (strain CLIB 122 / E 150)</name>
    <name type="common">Yeast</name>
    <name type="synonym">Candida lipolytica</name>
    <dbReference type="NCBI Taxonomy" id="284591"/>
    <lineage>
        <taxon>Eukaryota</taxon>
        <taxon>Fungi</taxon>
        <taxon>Dikarya</taxon>
        <taxon>Ascomycota</taxon>
        <taxon>Saccharomycotina</taxon>
        <taxon>Dipodascomycetes</taxon>
        <taxon>Dipodascales</taxon>
        <taxon>Dipodascales incertae sedis</taxon>
        <taxon>Yarrowia</taxon>
    </lineage>
</organism>
<gene>
    <name type="primary">RAD18</name>
    <name type="ordered locus">YALI0A08580g</name>
</gene>
<comment type="function">
    <text evidence="1">E3 RING-finger protein, member of the UBC2/RAD6 epistasis group. Associates to the E2 ubiquitin conjugating enzyme UBC2/RAD6 to form the UBC2-RAD18 ubiquitin ligase complex involved in postreplicative repair (PRR) of damaged DNA.</text>
</comment>
<comment type="catalytic activity">
    <reaction>
        <text>S-ubiquitinyl-[E2 ubiquitin-conjugating enzyme]-L-cysteine + [acceptor protein]-L-lysine = [E2 ubiquitin-conjugating enzyme]-L-cysteine + N(6)-ubiquitinyl-[acceptor protein]-L-lysine.</text>
        <dbReference type="EC" id="2.3.2.27"/>
    </reaction>
</comment>
<comment type="pathway">
    <text>Protein modification; protein ubiquitination.</text>
</comment>
<comment type="subunit">
    <text evidence="1">Interacts with E2 UBC2, forming a complex with ubiquitin ligase activity.</text>
</comment>
<comment type="subcellular location">
    <subcellularLocation>
        <location evidence="1">Nucleus</location>
    </subcellularLocation>
</comment>
<comment type="similarity">
    <text evidence="6">Belongs to the RAD18 family.</text>
</comment>